<dbReference type="EMBL" id="CP000251">
    <property type="protein sequence ID" value="ABC81717.1"/>
    <property type="molecule type" value="Genomic_DNA"/>
</dbReference>
<dbReference type="RefSeq" id="WP_011421000.1">
    <property type="nucleotide sequence ID" value="NC_007760.1"/>
</dbReference>
<dbReference type="SMR" id="Q2IJ85"/>
<dbReference type="STRING" id="290397.Adeh_1946"/>
<dbReference type="KEGG" id="ade:Adeh_1946"/>
<dbReference type="eggNOG" id="COG0051">
    <property type="taxonomic scope" value="Bacteria"/>
</dbReference>
<dbReference type="HOGENOM" id="CLU_122625_1_3_7"/>
<dbReference type="OrthoDB" id="9804464at2"/>
<dbReference type="Proteomes" id="UP000001935">
    <property type="component" value="Chromosome"/>
</dbReference>
<dbReference type="GO" id="GO:1990904">
    <property type="term" value="C:ribonucleoprotein complex"/>
    <property type="evidence" value="ECO:0007669"/>
    <property type="project" value="UniProtKB-KW"/>
</dbReference>
<dbReference type="GO" id="GO:0005840">
    <property type="term" value="C:ribosome"/>
    <property type="evidence" value="ECO:0007669"/>
    <property type="project" value="UniProtKB-KW"/>
</dbReference>
<dbReference type="GO" id="GO:0003735">
    <property type="term" value="F:structural constituent of ribosome"/>
    <property type="evidence" value="ECO:0007669"/>
    <property type="project" value="InterPro"/>
</dbReference>
<dbReference type="GO" id="GO:0000049">
    <property type="term" value="F:tRNA binding"/>
    <property type="evidence" value="ECO:0007669"/>
    <property type="project" value="UniProtKB-UniRule"/>
</dbReference>
<dbReference type="GO" id="GO:0006412">
    <property type="term" value="P:translation"/>
    <property type="evidence" value="ECO:0007669"/>
    <property type="project" value="UniProtKB-UniRule"/>
</dbReference>
<dbReference type="FunFam" id="3.30.70.600:FF:000001">
    <property type="entry name" value="30S ribosomal protein S10"/>
    <property type="match status" value="1"/>
</dbReference>
<dbReference type="Gene3D" id="3.30.70.600">
    <property type="entry name" value="Ribosomal protein S10 domain"/>
    <property type="match status" value="1"/>
</dbReference>
<dbReference type="HAMAP" id="MF_00508">
    <property type="entry name" value="Ribosomal_uS10"/>
    <property type="match status" value="1"/>
</dbReference>
<dbReference type="InterPro" id="IPR001848">
    <property type="entry name" value="Ribosomal_uS10"/>
</dbReference>
<dbReference type="InterPro" id="IPR018268">
    <property type="entry name" value="Ribosomal_uS10_CS"/>
</dbReference>
<dbReference type="InterPro" id="IPR027486">
    <property type="entry name" value="Ribosomal_uS10_dom"/>
</dbReference>
<dbReference type="InterPro" id="IPR036838">
    <property type="entry name" value="Ribosomal_uS10_dom_sf"/>
</dbReference>
<dbReference type="NCBIfam" id="NF001861">
    <property type="entry name" value="PRK00596.1"/>
    <property type="match status" value="1"/>
</dbReference>
<dbReference type="NCBIfam" id="TIGR01049">
    <property type="entry name" value="rpsJ_bact"/>
    <property type="match status" value="1"/>
</dbReference>
<dbReference type="PANTHER" id="PTHR11700">
    <property type="entry name" value="30S RIBOSOMAL PROTEIN S10 FAMILY MEMBER"/>
    <property type="match status" value="1"/>
</dbReference>
<dbReference type="Pfam" id="PF00338">
    <property type="entry name" value="Ribosomal_S10"/>
    <property type="match status" value="1"/>
</dbReference>
<dbReference type="PRINTS" id="PR00971">
    <property type="entry name" value="RIBOSOMALS10"/>
</dbReference>
<dbReference type="SMART" id="SM01403">
    <property type="entry name" value="Ribosomal_S10"/>
    <property type="match status" value="1"/>
</dbReference>
<dbReference type="SUPFAM" id="SSF54999">
    <property type="entry name" value="Ribosomal protein S10"/>
    <property type="match status" value="1"/>
</dbReference>
<dbReference type="PROSITE" id="PS00361">
    <property type="entry name" value="RIBOSOMAL_S10"/>
    <property type="match status" value="1"/>
</dbReference>
<accession>Q2IJ85</accession>
<keyword id="KW-1185">Reference proteome</keyword>
<keyword id="KW-0687">Ribonucleoprotein</keyword>
<keyword id="KW-0689">Ribosomal protein</keyword>
<comment type="function">
    <text evidence="1">Involved in the binding of tRNA to the ribosomes.</text>
</comment>
<comment type="subunit">
    <text evidence="1">Part of the 30S ribosomal subunit.</text>
</comment>
<comment type="similarity">
    <text evidence="1">Belongs to the universal ribosomal protein uS10 family.</text>
</comment>
<gene>
    <name evidence="1" type="primary">rpsJ</name>
    <name type="ordered locus">Adeh_1946</name>
</gene>
<feature type="chain" id="PRO_0000237008" description="Small ribosomal subunit protein uS10">
    <location>
        <begin position="1"/>
        <end position="101"/>
    </location>
</feature>
<name>RS10_ANADE</name>
<evidence type="ECO:0000255" key="1">
    <source>
        <dbReference type="HAMAP-Rule" id="MF_00508"/>
    </source>
</evidence>
<evidence type="ECO:0000305" key="2"/>
<proteinExistence type="inferred from homology"/>
<reference key="1">
    <citation type="submission" date="2006-01" db="EMBL/GenBank/DDBJ databases">
        <title>Complete sequence of Anaeromyxobacter dehalogenans 2CP-C.</title>
        <authorList>
            <person name="Copeland A."/>
            <person name="Lucas S."/>
            <person name="Lapidus A."/>
            <person name="Barry K."/>
            <person name="Detter J.C."/>
            <person name="Glavina T."/>
            <person name="Hammon N."/>
            <person name="Israni S."/>
            <person name="Pitluck S."/>
            <person name="Brettin T."/>
            <person name="Bruce D."/>
            <person name="Han C."/>
            <person name="Tapia R."/>
            <person name="Gilna P."/>
            <person name="Kiss H."/>
            <person name="Schmutz J."/>
            <person name="Larimer F."/>
            <person name="Land M."/>
            <person name="Kyrpides N."/>
            <person name="Anderson I."/>
            <person name="Sanford R.A."/>
            <person name="Ritalahti K.M."/>
            <person name="Thomas H.S."/>
            <person name="Kirby J.R."/>
            <person name="Zhulin I.B."/>
            <person name="Loeffler F.E."/>
            <person name="Richardson P."/>
        </authorList>
    </citation>
    <scope>NUCLEOTIDE SEQUENCE [LARGE SCALE GENOMIC DNA]</scope>
    <source>
        <strain>2CP-C</strain>
    </source>
</reference>
<protein>
    <recommendedName>
        <fullName evidence="1">Small ribosomal subunit protein uS10</fullName>
    </recommendedName>
    <alternativeName>
        <fullName evidence="2">30S ribosomal protein S10</fullName>
    </alternativeName>
</protein>
<organism>
    <name type="scientific">Anaeromyxobacter dehalogenans (strain 2CP-C)</name>
    <dbReference type="NCBI Taxonomy" id="290397"/>
    <lineage>
        <taxon>Bacteria</taxon>
        <taxon>Pseudomonadati</taxon>
        <taxon>Myxococcota</taxon>
        <taxon>Myxococcia</taxon>
        <taxon>Myxococcales</taxon>
        <taxon>Cystobacterineae</taxon>
        <taxon>Anaeromyxobacteraceae</taxon>
        <taxon>Anaeromyxobacter</taxon>
    </lineage>
</organism>
<sequence length="101" mass="11436">MATQKIRIRLKAYDYKLLDQSAGEIVETAKRTGAKVAGPIPLPTRINKFTVLRSPHVDKKSREQFEIRTHKRLLDILEPTPQTLDALMKLDLSAGVDVEIK</sequence>